<sequence>MNESTRNWPEELLELLGQTELTVNKIGYSGDHVYHVKEYRGTPAFLKIAPSVWWRTLRPEIEALAWLDGKLPVPKILYTAEHGGMDYLLMEALGGKDGSHETIQAKRKLFVKLYAEGLRSVHGLDIRECPLSNGLEKKLRDAKRIVDESLVDPADIKEEYDCTPEELYGLLLESKPVTEDLVFAHGDYCAPNLIIDGEKLSGFIDLGRAGVADRYQDISLAIRSLRHDYGDDRYKALFLELYGLDGLDEDKVRYYIRLDEFF</sequence>
<reference key="1">
    <citation type="journal article" date="1986" name="Biochem. J.">
        <title>Sequence and interspecies transfer of an aminoglycoside phosphotransferase gene (APH) of Bacillus circulans. Self-defence mechanism in antibiotic-producing organisms.</title>
        <authorList>
            <person name="Herbert C.J."/>
            <person name="Sarwar M."/>
            <person name="Ner S.S."/>
            <person name="Giles I.G."/>
            <person name="Akhtar M."/>
        </authorList>
    </citation>
    <scope>NUCLEOTIDE SEQUENCE [GENOMIC DNA]</scope>
</reference>
<reference key="2">
    <citation type="journal article" date="1983" name="FEBS Lett.">
        <title>The sequence of an antibiotic resistance gene from an antibiotic-producing bacterium. Homologies with transposon genes.</title>
        <authorList>
            <person name="Herbert C.J."/>
            <person name="Giles I.G."/>
            <person name="Akhtar M."/>
        </authorList>
    </citation>
    <scope>NUCLEOTIDE SEQUENCE [GENOMIC DNA]</scope>
</reference>
<reference key="3">
    <citation type="journal article" date="1994" name="Gene">
        <title>Biosynthesis of butirosin in Bacillus circulans NRRL B3312: identification by sequence analysis and insertional mutagenesis of the butB gene involved in antibiotic production.</title>
        <authorList>
            <person name="Aubert-Pivert E."/>
            <person name="Davies J."/>
        </authorList>
    </citation>
    <scope>NUCLEOTIDE SEQUENCE [GENOMIC DNA] OF 1-25</scope>
    <source>
        <strain>BCRC 11491 / NRRL B-3312</strain>
    </source>
</reference>
<reference key="4">
    <citation type="journal article" date="1990" name="Biochem. J.">
        <title>Cloning of aminoglycoside phosphotransferase (APH) gene from antibiotic-producing strain of Bacillus circulans into a high-expression vector, pKK223-3. Purification, properties and location of the enzyme.</title>
        <authorList>
            <person name="Sarwar M."/>
            <person name="Akhtar M."/>
        </authorList>
    </citation>
    <scope>PROTEIN SEQUENCE OF 1-12</scope>
</reference>
<dbReference type="EC" id="2.7.1.95"/>
<dbReference type="EMBL" id="X03364">
    <property type="protein sequence ID" value="CAA27061.1"/>
    <property type="molecule type" value="Genomic_DNA"/>
</dbReference>
<dbReference type="EMBL" id="L20421">
    <property type="protein sequence ID" value="AAA62589.1"/>
    <property type="molecule type" value="Genomic_DNA"/>
</dbReference>
<dbReference type="PIR" id="A00664">
    <property type="entry name" value="PKBSK"/>
</dbReference>
<dbReference type="RefSeq" id="WP_063841674.1">
    <property type="nucleotide sequence ID" value="NG_047428.1"/>
</dbReference>
<dbReference type="SMR" id="P00553"/>
<dbReference type="CARD" id="ARO:3002648">
    <property type="molecule name" value="APH(3')-IVa"/>
    <property type="mechanism identifier" value="ARO:0001004"/>
    <property type="mechanism name" value="antibiotic inactivation"/>
</dbReference>
<dbReference type="KEGG" id="ag:CAA27061"/>
<dbReference type="GO" id="GO:0005737">
    <property type="term" value="C:cytoplasm"/>
    <property type="evidence" value="ECO:0007669"/>
    <property type="project" value="UniProtKB-SubCell"/>
</dbReference>
<dbReference type="GO" id="GO:0005524">
    <property type="term" value="F:ATP binding"/>
    <property type="evidence" value="ECO:0007669"/>
    <property type="project" value="UniProtKB-KW"/>
</dbReference>
<dbReference type="GO" id="GO:0008910">
    <property type="term" value="F:kanamycin kinase activity"/>
    <property type="evidence" value="ECO:0007669"/>
    <property type="project" value="UniProtKB-EC"/>
</dbReference>
<dbReference type="GO" id="GO:0046677">
    <property type="term" value="P:response to antibiotic"/>
    <property type="evidence" value="ECO:0007669"/>
    <property type="project" value="UniProtKB-KW"/>
</dbReference>
<dbReference type="CDD" id="cd05150">
    <property type="entry name" value="APH"/>
    <property type="match status" value="1"/>
</dbReference>
<dbReference type="Gene3D" id="3.90.1200.10">
    <property type="match status" value="1"/>
</dbReference>
<dbReference type="Gene3D" id="3.30.200.20">
    <property type="entry name" value="Phosphorylase Kinase, domain 1"/>
    <property type="match status" value="1"/>
</dbReference>
<dbReference type="InterPro" id="IPR051678">
    <property type="entry name" value="AGP_Transferase"/>
</dbReference>
<dbReference type="InterPro" id="IPR002575">
    <property type="entry name" value="Aminoglycoside_PTrfase"/>
</dbReference>
<dbReference type="InterPro" id="IPR024165">
    <property type="entry name" value="Kan/Strep_kinase"/>
</dbReference>
<dbReference type="InterPro" id="IPR011009">
    <property type="entry name" value="Kinase-like_dom_sf"/>
</dbReference>
<dbReference type="NCBIfam" id="NF033068">
    <property type="entry name" value="APH_3p"/>
    <property type="match status" value="1"/>
</dbReference>
<dbReference type="NCBIfam" id="NF033065">
    <property type="entry name" value="APH_3p_IVa"/>
    <property type="match status" value="1"/>
</dbReference>
<dbReference type="PANTHER" id="PTHR21310:SF41">
    <property type="entry name" value="3'-PHOSPHOTRANSFERASE, PUTATIVE-RELATED"/>
    <property type="match status" value="1"/>
</dbReference>
<dbReference type="PANTHER" id="PTHR21310">
    <property type="entry name" value="AMINOGLYCOSIDE PHOSPHOTRANSFERASE-RELATED-RELATED"/>
    <property type="match status" value="1"/>
</dbReference>
<dbReference type="Pfam" id="PF01636">
    <property type="entry name" value="APH"/>
    <property type="match status" value="1"/>
</dbReference>
<dbReference type="PIRSF" id="PIRSF000706">
    <property type="entry name" value="Kanamycin_kin"/>
    <property type="match status" value="1"/>
</dbReference>
<dbReference type="SUPFAM" id="SSF56112">
    <property type="entry name" value="Protein kinase-like (PK-like)"/>
    <property type="match status" value="1"/>
</dbReference>
<accession>P00553</accession>
<keyword id="KW-0046">Antibiotic resistance</keyword>
<keyword id="KW-0067">ATP-binding</keyword>
<keyword id="KW-0963">Cytoplasm</keyword>
<keyword id="KW-0903">Direct protein sequencing</keyword>
<keyword id="KW-0418">Kinase</keyword>
<keyword id="KW-0547">Nucleotide-binding</keyword>
<keyword id="KW-0808">Transferase</keyword>
<comment type="function">
    <text>Resistance to butirosin and structurally-related aminoglycosides, including kanamycin and amikacin.</text>
</comment>
<comment type="catalytic activity">
    <reaction>
        <text>kanamycin A + ATP = kanamycin 3'-phosphate + ADP + H(+)</text>
        <dbReference type="Rhea" id="RHEA:24256"/>
        <dbReference type="ChEBI" id="CHEBI:15378"/>
        <dbReference type="ChEBI" id="CHEBI:30616"/>
        <dbReference type="ChEBI" id="CHEBI:57909"/>
        <dbReference type="ChEBI" id="CHEBI:58214"/>
        <dbReference type="ChEBI" id="CHEBI:456216"/>
        <dbReference type="EC" id="2.7.1.95"/>
    </reaction>
</comment>
<comment type="subunit">
    <text>Monomer.</text>
</comment>
<comment type="subcellular location">
    <subcellularLocation>
        <location>Cytoplasm</location>
    </subcellularLocation>
</comment>
<comment type="similarity">
    <text evidence="5">Belongs to the aminoglycoside phosphotransferase family.</text>
</comment>
<proteinExistence type="evidence at protein level"/>
<feature type="chain" id="PRO_0000204807" description="Aminoglycoside 3'-phosphotransferase">
    <location>
        <begin position="1"/>
        <end position="262"/>
    </location>
</feature>
<feature type="active site" description="Proton acceptor" evidence="1">
    <location>
        <position position="187"/>
    </location>
</feature>
<feature type="sequence conflict" description="In Ref. 4; AA sequence." evidence="5" ref="4">
    <original>E</original>
    <variation>Q</variation>
    <location>
        <position position="3"/>
    </location>
</feature>
<feature type="sequence conflict" description="In Ref. 2." evidence="5" ref="2">
    <original>K</original>
    <variation>N</variation>
    <location>
        <position position="106"/>
    </location>
</feature>
<organism>
    <name type="scientific">Niallia circulans</name>
    <name type="common">Bacillus circulans</name>
    <dbReference type="NCBI Taxonomy" id="1397"/>
    <lineage>
        <taxon>Bacteria</taxon>
        <taxon>Bacillati</taxon>
        <taxon>Bacillota</taxon>
        <taxon>Bacilli</taxon>
        <taxon>Bacillales</taxon>
        <taxon>Bacillaceae</taxon>
        <taxon>Niallia</taxon>
    </lineage>
</organism>
<name>KKA4_NIACI</name>
<evidence type="ECO:0000250" key="1"/>
<evidence type="ECO:0000303" key="2">
    <source>
    </source>
</evidence>
<evidence type="ECO:0000303" key="3">
    <source>
    </source>
</evidence>
<evidence type="ECO:0000303" key="4">
    <source>
    </source>
</evidence>
<evidence type="ECO:0000305" key="5"/>
<protein>
    <recommendedName>
        <fullName evidence="2 3">Aminoglycoside 3'-phosphotransferase</fullName>
        <ecNumber>2.7.1.95</ecNumber>
    </recommendedName>
    <alternativeName>
        <fullName evidence="4">APH(3')IV</fullName>
    </alternativeName>
    <alternativeName>
        <fullName evidence="4">Butirosin resistance protein A</fullName>
    </alternativeName>
    <alternativeName>
        <fullName>Kanamycin kinase, type IV</fullName>
    </alternativeName>
    <alternativeName>
        <fullName>Neomycin-kanamycin phosphotransferase type IV</fullName>
    </alternativeName>
</protein>
<gene>
    <name evidence="4" type="primary">aphA4</name>
    <name evidence="2 3" type="synonym">aph</name>
    <name evidence="4" type="synonym">butA</name>
</gene>